<feature type="chain" id="PRO_0000414225" description="High affinity cAMP-specific and IBMX-insensitive 3',5'-cyclic phosphodiesterase 8B">
    <location>
        <begin position="1"/>
        <end position="865"/>
    </location>
</feature>
<feature type="domain" description="PAS" evidence="4">
    <location>
        <begin position="247"/>
        <end position="318"/>
    </location>
</feature>
<feature type="domain" description="PDEase" evidence="5">
    <location>
        <begin position="519"/>
        <end position="855"/>
    </location>
</feature>
<feature type="region of interest" description="Disordered" evidence="6">
    <location>
        <begin position="17"/>
        <end position="40"/>
    </location>
</feature>
<feature type="region of interest" description="Disordered" evidence="6">
    <location>
        <begin position="52"/>
        <end position="92"/>
    </location>
</feature>
<feature type="region of interest" description="Disordered" evidence="6">
    <location>
        <begin position="373"/>
        <end position="415"/>
    </location>
</feature>
<feature type="compositionally biased region" description="Polar residues" evidence="6">
    <location>
        <begin position="23"/>
        <end position="36"/>
    </location>
</feature>
<feature type="compositionally biased region" description="Low complexity" evidence="6">
    <location>
        <begin position="75"/>
        <end position="90"/>
    </location>
</feature>
<feature type="compositionally biased region" description="Polar residues" evidence="6">
    <location>
        <begin position="402"/>
        <end position="415"/>
    </location>
</feature>
<feature type="active site" description="Proton donor" evidence="3">
    <location>
        <position position="595"/>
    </location>
</feature>
<feature type="binding site" evidence="2">
    <location>
        <position position="599"/>
    </location>
    <ligand>
        <name>a divalent metal cation</name>
        <dbReference type="ChEBI" id="CHEBI:60240"/>
        <label>1</label>
    </ligand>
</feature>
<feature type="binding site" evidence="2">
    <location>
        <position position="635"/>
    </location>
    <ligand>
        <name>a divalent metal cation</name>
        <dbReference type="ChEBI" id="CHEBI:60240"/>
        <label>1</label>
    </ligand>
</feature>
<feature type="binding site" evidence="2">
    <location>
        <position position="636"/>
    </location>
    <ligand>
        <name>a divalent metal cation</name>
        <dbReference type="ChEBI" id="CHEBI:60240"/>
        <label>1</label>
    </ligand>
</feature>
<feature type="binding site" evidence="2">
    <location>
        <position position="636"/>
    </location>
    <ligand>
        <name>a divalent metal cation</name>
        <dbReference type="ChEBI" id="CHEBI:60240"/>
        <label>2</label>
    </ligand>
</feature>
<feature type="binding site" evidence="2">
    <location>
        <position position="761"/>
    </location>
    <ligand>
        <name>a divalent metal cation</name>
        <dbReference type="ChEBI" id="CHEBI:60240"/>
        <label>1</label>
    </ligand>
</feature>
<feature type="modified residue" description="Phosphoserine" evidence="9">
    <location>
        <position position="497"/>
    </location>
</feature>
<feature type="modified residue" description="Phosphoserine" evidence="9">
    <location>
        <position position="731"/>
    </location>
</feature>
<feature type="modified residue" description="Phosphoserine" evidence="9">
    <location>
        <position position="734"/>
    </location>
</feature>
<protein>
    <recommendedName>
        <fullName>High affinity cAMP-specific and IBMX-insensitive 3',5'-cyclic phosphodiesterase 8B</fullName>
        <shortName>PDE8B</shortName>
        <ecNumber>3.1.4.53</ecNumber>
    </recommendedName>
    <alternativeName>
        <fullName>Cell proliferation-inducing gene 22 protein</fullName>
    </alternativeName>
</protein>
<organism>
    <name type="scientific">Mus musculus</name>
    <name type="common">Mouse</name>
    <dbReference type="NCBI Taxonomy" id="10090"/>
    <lineage>
        <taxon>Eukaryota</taxon>
        <taxon>Metazoa</taxon>
        <taxon>Chordata</taxon>
        <taxon>Craniata</taxon>
        <taxon>Vertebrata</taxon>
        <taxon>Euteleostomi</taxon>
        <taxon>Mammalia</taxon>
        <taxon>Eutheria</taxon>
        <taxon>Euarchontoglires</taxon>
        <taxon>Glires</taxon>
        <taxon>Rodentia</taxon>
        <taxon>Myomorpha</taxon>
        <taxon>Muroidea</taxon>
        <taxon>Muridae</taxon>
        <taxon>Murinae</taxon>
        <taxon>Mus</taxon>
        <taxon>Mus</taxon>
    </lineage>
</organism>
<keyword id="KW-0114">cAMP</keyword>
<keyword id="KW-0378">Hydrolase</keyword>
<keyword id="KW-0479">Metal-binding</keyword>
<keyword id="KW-0597">Phosphoprotein</keyword>
<keyword id="KW-1185">Reference proteome</keyword>
<sequence length="865" mass="96739">MGCAPSIHVSQSGVIYCRDSDESNSPRQTSSVSQGPTAPLHGLFVQTDAADAMPPSRAAGPPGAVRVRRSRAELGSGSSTGSSGPATTTCRGRRRHCCSSAEAETQTSYTSVKVLLIFAKEDSQSDGFWWACDRAGYRCNIARTPESALECFLDKHHEIIVIDHRQSRNFDAEAVCRSIRATNPSEHTVILAVVSQASDDHEEASVLPLLHAGFNRRFMENSSIIACYNELIQIEHGEVRSQFKLRACNSVFTALDHCHEAIEITSDDHVIQYVNPAFERMMGYHKGELLGKELADLPKSDKNRADLLDTINTCIKKGKEWQGVYYARRKSGDSIQQHVKITPVIGQGGKIRHFVSLKKLCCTTDSNKQIHRIHRDSGDNSQTEPHSFRHKSRRKESIDVKSISSRGSDAPSLQNRRYPSMARIHSMTIEAPITKVINIINAAQENSPVTVAEALDRVLEILRTTELYSPQLGTKDEDPHTSDLVGGLMTDGLRRLSGNEYVFTKNVHHSHSHLSMPITINDVPPSIAQLLDNEESWDFNIFELEAVTHKRPLVYLGLKVFSRFGVCEFLNCTETTLRAWLQVIEANYHSSNAYHNSTHAADVLHATAFFLGKERVKGSLDQLDEVAALIAATVHDVDHPGRTNSFLCNAGSELAVLYNDTAVLESHHTALAFQLTVKDTKCNIFKNIDRNHYRTLRQAIIDMVLATEMTKHFEHVNKFVNSINKPLAAESEGSDCECNPTGKNFPENQILIKRMMIKCADVANPCRPLDLCIEWAGRISEEYFAQTDEEKRQGLPVVMPVFDRNTCSIPKSQISFIDYFITDMFDAWDAFAHLPALMQHLADNYKHWKTLDDLKCKTLRLPSDS</sequence>
<name>PDE8B_MOUSE</name>
<accession>E9Q4S1</accession>
<reference key="1">
    <citation type="journal article" date="2009" name="PLoS Biol.">
        <title>Lineage-specific biology revealed by a finished genome assembly of the mouse.</title>
        <authorList>
            <person name="Church D.M."/>
            <person name="Goodstadt L."/>
            <person name="Hillier L.W."/>
            <person name="Zody M.C."/>
            <person name="Goldstein S."/>
            <person name="She X."/>
            <person name="Bult C.J."/>
            <person name="Agarwala R."/>
            <person name="Cherry J.L."/>
            <person name="DiCuccio M."/>
            <person name="Hlavina W."/>
            <person name="Kapustin Y."/>
            <person name="Meric P."/>
            <person name="Maglott D."/>
            <person name="Birtle Z."/>
            <person name="Marques A.C."/>
            <person name="Graves T."/>
            <person name="Zhou S."/>
            <person name="Teague B."/>
            <person name="Potamousis K."/>
            <person name="Churas C."/>
            <person name="Place M."/>
            <person name="Herschleb J."/>
            <person name="Runnheim R."/>
            <person name="Forrest D."/>
            <person name="Amos-Landgraf J."/>
            <person name="Schwartz D.C."/>
            <person name="Cheng Z."/>
            <person name="Lindblad-Toh K."/>
            <person name="Eichler E.E."/>
            <person name="Ponting C.P."/>
        </authorList>
    </citation>
    <scope>NUCLEOTIDE SEQUENCE [LARGE SCALE GENOMIC DNA]</scope>
    <source>
        <strain>C57BL/6J</strain>
    </source>
</reference>
<reference key="2">
    <citation type="journal article" date="2008" name="Eur. J. Hum. Genet.">
        <title>A cAMP-specific phosphodiesterase (PDE8B) that is mutated in adrenal hyperplasia is expressed widely in human and mouse tissues: a novel PDE8B isoform in human adrenal cortex.</title>
        <authorList>
            <person name="Horvath A."/>
            <person name="Giatzakis C."/>
            <person name="Tsang K."/>
            <person name="Greene E."/>
            <person name="Osorio P."/>
            <person name="Boikos S."/>
            <person name="Libe R."/>
            <person name="Patronas Y."/>
            <person name="Robinson-White A."/>
            <person name="Remmers E."/>
            <person name="Bertherat J."/>
            <person name="Nesterova M."/>
            <person name="Stratakis C.A."/>
        </authorList>
    </citation>
    <scope>DEVELOPMENTAL STAGE</scope>
    <scope>TISSUE SPECIFICITY</scope>
</reference>
<reference key="3">
    <citation type="journal article" date="2010" name="Cell">
        <title>A tissue-specific atlas of mouse protein phosphorylation and expression.</title>
        <authorList>
            <person name="Huttlin E.L."/>
            <person name="Jedrychowski M.P."/>
            <person name="Elias J.E."/>
            <person name="Goswami T."/>
            <person name="Rad R."/>
            <person name="Beausoleil S.A."/>
            <person name="Villen J."/>
            <person name="Haas W."/>
            <person name="Sowa M.E."/>
            <person name="Gygi S.P."/>
        </authorList>
    </citation>
    <scope>PHOSPHORYLATION [LARGE SCALE ANALYSIS] AT SER-497; SER-731 AND SER-734</scope>
    <scope>IDENTIFICATION BY MASS SPECTROMETRY [LARGE SCALE ANALYSIS]</scope>
    <source>
        <tissue>Brain</tissue>
        <tissue>Lung</tissue>
        <tissue>Testis</tissue>
    </source>
</reference>
<dbReference type="EC" id="3.1.4.53"/>
<dbReference type="EMBL" id="AC123034">
    <property type="status" value="NOT_ANNOTATED_CDS"/>
    <property type="molecule type" value="Genomic_DNA"/>
</dbReference>
<dbReference type="EMBL" id="AC134439">
    <property type="status" value="NOT_ANNOTATED_CDS"/>
    <property type="molecule type" value="Genomic_DNA"/>
</dbReference>
<dbReference type="EMBL" id="AC147108">
    <property type="status" value="NOT_ANNOTATED_CDS"/>
    <property type="molecule type" value="Genomic_DNA"/>
</dbReference>
<dbReference type="SMR" id="E9Q4S1"/>
<dbReference type="FunCoup" id="E9Q4S1">
    <property type="interactions" value="151"/>
</dbReference>
<dbReference type="STRING" id="10090.ENSMUSP00000124068"/>
<dbReference type="GlyGen" id="E9Q4S1">
    <property type="glycosylation" value="2 sites, 1 N-linked glycan (1 site)"/>
</dbReference>
<dbReference type="iPTMnet" id="E9Q4S1"/>
<dbReference type="PhosphoSitePlus" id="E9Q4S1"/>
<dbReference type="SwissPalm" id="E9Q4S1"/>
<dbReference type="ProteomicsDB" id="287905"/>
<dbReference type="Ensembl" id="ENSMUST00000067082.14">
    <property type="protein sequence ID" value="ENSMUSP00000070465.8"/>
    <property type="gene ID" value="ENSMUSG00000021684.18"/>
</dbReference>
<dbReference type="AGR" id="MGI:2443999"/>
<dbReference type="MGI" id="MGI:2443999">
    <property type="gene designation" value="Pde8b"/>
</dbReference>
<dbReference type="VEuPathDB" id="HostDB:ENSMUSG00000021684"/>
<dbReference type="eggNOG" id="KOG1229">
    <property type="taxonomic scope" value="Eukaryota"/>
</dbReference>
<dbReference type="GeneTree" id="ENSGT00940000157817"/>
<dbReference type="InParanoid" id="E9Q4S1"/>
<dbReference type="OMA" id="IDHRGQR"/>
<dbReference type="OrthoDB" id="189220at2759"/>
<dbReference type="PhylomeDB" id="E9Q4S1"/>
<dbReference type="Reactome" id="R-MMU-418555">
    <property type="pathway name" value="G alpha (s) signalling events"/>
</dbReference>
<dbReference type="UniPathway" id="UPA00762">
    <property type="reaction ID" value="UER00747"/>
</dbReference>
<dbReference type="CD-CODE" id="CE726F99">
    <property type="entry name" value="Postsynaptic density"/>
</dbReference>
<dbReference type="ChiTaRS" id="Pde8b">
    <property type="organism name" value="mouse"/>
</dbReference>
<dbReference type="PRO" id="PR:E9Q4S1"/>
<dbReference type="Proteomes" id="UP000000589">
    <property type="component" value="Chromosome 13"/>
</dbReference>
<dbReference type="RNAct" id="E9Q4S1">
    <property type="molecule type" value="protein"/>
</dbReference>
<dbReference type="Bgee" id="ENSMUSG00000021684">
    <property type="expression patterns" value="Expressed in olfactory tubercle and 224 other cell types or tissues"/>
</dbReference>
<dbReference type="ExpressionAtlas" id="E9Q4S1">
    <property type="expression patterns" value="baseline and differential"/>
</dbReference>
<dbReference type="GO" id="GO:0004115">
    <property type="term" value="F:3',5'-cyclic-AMP phosphodiesterase activity"/>
    <property type="evidence" value="ECO:0000314"/>
    <property type="project" value="MGI"/>
</dbReference>
<dbReference type="GO" id="GO:0046872">
    <property type="term" value="F:metal ion binding"/>
    <property type="evidence" value="ECO:0007669"/>
    <property type="project" value="UniProtKB-KW"/>
</dbReference>
<dbReference type="GO" id="GO:0001662">
    <property type="term" value="P:behavioral fear response"/>
    <property type="evidence" value="ECO:0000315"/>
    <property type="project" value="MGI"/>
</dbReference>
<dbReference type="GO" id="GO:0006198">
    <property type="term" value="P:cAMP catabolic process"/>
    <property type="evidence" value="ECO:0007669"/>
    <property type="project" value="UniProtKB-UniPathway"/>
</dbReference>
<dbReference type="GO" id="GO:0061179">
    <property type="term" value="P:negative regulation of insulin secretion involved in cellular response to glucose stimulus"/>
    <property type="evidence" value="ECO:0007669"/>
    <property type="project" value="Ensembl"/>
</dbReference>
<dbReference type="GO" id="GO:0090032">
    <property type="term" value="P:negative regulation of steroid hormone biosynthetic process"/>
    <property type="evidence" value="ECO:0000315"/>
    <property type="project" value="MGI"/>
</dbReference>
<dbReference type="GO" id="GO:0050885">
    <property type="term" value="P:neuromuscular process controlling balance"/>
    <property type="evidence" value="ECO:0000315"/>
    <property type="project" value="MGI"/>
</dbReference>
<dbReference type="GO" id="GO:0035106">
    <property type="term" value="P:operant conditioning"/>
    <property type="evidence" value="ECO:0000315"/>
    <property type="project" value="MGI"/>
</dbReference>
<dbReference type="GO" id="GO:0007165">
    <property type="term" value="P:signal transduction"/>
    <property type="evidence" value="ECO:0007669"/>
    <property type="project" value="InterPro"/>
</dbReference>
<dbReference type="GO" id="GO:0008542">
    <property type="term" value="P:visual learning"/>
    <property type="evidence" value="ECO:0000315"/>
    <property type="project" value="MGI"/>
</dbReference>
<dbReference type="CDD" id="cd00077">
    <property type="entry name" value="HDc"/>
    <property type="match status" value="1"/>
</dbReference>
<dbReference type="CDD" id="cd00130">
    <property type="entry name" value="PAS"/>
    <property type="match status" value="1"/>
</dbReference>
<dbReference type="FunFam" id="1.10.1300.10:FF:000002">
    <property type="entry name" value="Phosphodiesterase"/>
    <property type="match status" value="1"/>
</dbReference>
<dbReference type="FunFam" id="3.30.450.20:FF:000023">
    <property type="entry name" value="Phosphodiesterase"/>
    <property type="match status" value="1"/>
</dbReference>
<dbReference type="Gene3D" id="1.10.1300.10">
    <property type="entry name" value="3'5'-cyclic nucleotide phosphodiesterase, catalytic domain"/>
    <property type="match status" value="1"/>
</dbReference>
<dbReference type="Gene3D" id="3.30.450.20">
    <property type="entry name" value="PAS domain"/>
    <property type="match status" value="1"/>
</dbReference>
<dbReference type="InterPro" id="IPR003607">
    <property type="entry name" value="HD/PDEase_dom"/>
</dbReference>
<dbReference type="InterPro" id="IPR000014">
    <property type="entry name" value="PAS"/>
</dbReference>
<dbReference type="InterPro" id="IPR035965">
    <property type="entry name" value="PAS-like_dom_sf"/>
</dbReference>
<dbReference type="InterPro" id="IPR023088">
    <property type="entry name" value="PDEase"/>
</dbReference>
<dbReference type="InterPro" id="IPR002073">
    <property type="entry name" value="PDEase_catalytic_dom"/>
</dbReference>
<dbReference type="InterPro" id="IPR036971">
    <property type="entry name" value="PDEase_catalytic_dom_sf"/>
</dbReference>
<dbReference type="InterPro" id="IPR023174">
    <property type="entry name" value="PDEase_CS"/>
</dbReference>
<dbReference type="InterPro" id="IPR013938">
    <property type="entry name" value="PDEase_PDE8"/>
</dbReference>
<dbReference type="NCBIfam" id="TIGR00229">
    <property type="entry name" value="sensory_box"/>
    <property type="match status" value="1"/>
</dbReference>
<dbReference type="PANTHER" id="PTHR11347">
    <property type="entry name" value="CYCLIC NUCLEOTIDE PHOSPHODIESTERASE"/>
    <property type="match status" value="1"/>
</dbReference>
<dbReference type="Pfam" id="PF13426">
    <property type="entry name" value="PAS_9"/>
    <property type="match status" value="1"/>
</dbReference>
<dbReference type="Pfam" id="PF08629">
    <property type="entry name" value="PDE8"/>
    <property type="match status" value="1"/>
</dbReference>
<dbReference type="Pfam" id="PF23198">
    <property type="entry name" value="PDE8A_N"/>
    <property type="match status" value="1"/>
</dbReference>
<dbReference type="Pfam" id="PF00233">
    <property type="entry name" value="PDEase_I"/>
    <property type="match status" value="1"/>
</dbReference>
<dbReference type="PRINTS" id="PR00387">
    <property type="entry name" value="PDIESTERASE1"/>
</dbReference>
<dbReference type="SMART" id="SM00471">
    <property type="entry name" value="HDc"/>
    <property type="match status" value="1"/>
</dbReference>
<dbReference type="SMART" id="SM00091">
    <property type="entry name" value="PAS"/>
    <property type="match status" value="1"/>
</dbReference>
<dbReference type="SUPFAM" id="SSF109604">
    <property type="entry name" value="HD-domain/PDEase-like"/>
    <property type="match status" value="1"/>
</dbReference>
<dbReference type="SUPFAM" id="SSF55785">
    <property type="entry name" value="PYP-like sensor domain (PAS domain)"/>
    <property type="match status" value="1"/>
</dbReference>
<dbReference type="PROSITE" id="PS50112">
    <property type="entry name" value="PAS"/>
    <property type="match status" value="1"/>
</dbReference>
<dbReference type="PROSITE" id="PS00126">
    <property type="entry name" value="PDEASE_I_1"/>
    <property type="match status" value="1"/>
</dbReference>
<dbReference type="PROSITE" id="PS51845">
    <property type="entry name" value="PDEASE_I_2"/>
    <property type="match status" value="1"/>
</dbReference>
<evidence type="ECO:0000250" key="1"/>
<evidence type="ECO:0000250" key="2">
    <source>
        <dbReference type="UniProtKB" id="O60658"/>
    </source>
</evidence>
<evidence type="ECO:0000250" key="3">
    <source>
        <dbReference type="UniProtKB" id="O76083"/>
    </source>
</evidence>
<evidence type="ECO:0000255" key="4">
    <source>
        <dbReference type="PROSITE-ProRule" id="PRU00140"/>
    </source>
</evidence>
<evidence type="ECO:0000255" key="5">
    <source>
        <dbReference type="PROSITE-ProRule" id="PRU01192"/>
    </source>
</evidence>
<evidence type="ECO:0000256" key="6">
    <source>
        <dbReference type="SAM" id="MobiDB-lite"/>
    </source>
</evidence>
<evidence type="ECO:0000269" key="7">
    <source>
    </source>
</evidence>
<evidence type="ECO:0000305" key="8"/>
<evidence type="ECO:0007744" key="9">
    <source>
    </source>
</evidence>
<comment type="function">
    <text evidence="1">Hydrolyzes the second messenger cAMP, which is a key regulator of many important physiological processes. May be involved in specific signaling in the thyroid gland (By similarity).</text>
</comment>
<comment type="catalytic activity">
    <reaction>
        <text>3',5'-cyclic AMP + H2O = AMP + H(+)</text>
        <dbReference type="Rhea" id="RHEA:25277"/>
        <dbReference type="ChEBI" id="CHEBI:15377"/>
        <dbReference type="ChEBI" id="CHEBI:15378"/>
        <dbReference type="ChEBI" id="CHEBI:58165"/>
        <dbReference type="ChEBI" id="CHEBI:456215"/>
        <dbReference type="EC" id="3.1.4.53"/>
    </reaction>
</comment>
<comment type="cofactor">
    <cofactor evidence="1">
        <name>a divalent metal cation</name>
        <dbReference type="ChEBI" id="CHEBI:60240"/>
    </cofactor>
    <text evidence="1">Binds 2 divalent metal cations per subunit. Site 1 may preferentially bind zinc ions, while site 2 has a preference for magnesium and/or manganese ions.</text>
</comment>
<comment type="pathway">
    <text>Purine metabolism; 3',5'-cyclic AMP degradation; AMP from 3',5'-cyclic AMP: step 1/1.</text>
</comment>
<comment type="tissue specificity">
    <text evidence="7">Widely expressed.</text>
</comment>
<comment type="developmental stage">
    <text evidence="7">Detectable in the adrenal gland of newborn animals.</text>
</comment>
<comment type="domain">
    <text>Composed of a C-terminal catalytic domain containing two putative divalent metal sites and an N-terminal regulatory domain.</text>
</comment>
<comment type="similarity">
    <text evidence="8">Belongs to the cyclic nucleotide phosphodiesterase family. PDE8 subfamily.</text>
</comment>
<proteinExistence type="evidence at protein level"/>
<gene>
    <name type="primary">Pde8b</name>
</gene>